<protein>
    <recommendedName>
        <fullName evidence="1">DNA-directed RNA polymerase subunit beta</fullName>
        <shortName evidence="1">RNAP subunit beta</shortName>
        <ecNumber evidence="1">2.7.7.6</ecNumber>
    </recommendedName>
    <alternativeName>
        <fullName evidence="1">RNA polymerase subunit beta</fullName>
    </alternativeName>
    <alternativeName>
        <fullName evidence="1">Transcriptase subunit beta</fullName>
    </alternativeName>
</protein>
<organism>
    <name type="scientific">Escherichia coli O6:K15:H31 (strain 536 / UPEC)</name>
    <dbReference type="NCBI Taxonomy" id="362663"/>
    <lineage>
        <taxon>Bacteria</taxon>
        <taxon>Pseudomonadati</taxon>
        <taxon>Pseudomonadota</taxon>
        <taxon>Gammaproteobacteria</taxon>
        <taxon>Enterobacterales</taxon>
        <taxon>Enterobacteriaceae</taxon>
        <taxon>Escherichia</taxon>
    </lineage>
</organism>
<comment type="function">
    <text evidence="1">DNA-dependent RNA polymerase catalyzes the transcription of DNA into RNA using the four ribonucleoside triphosphates as substrates.</text>
</comment>
<comment type="catalytic activity">
    <reaction evidence="1">
        <text>RNA(n) + a ribonucleoside 5'-triphosphate = RNA(n+1) + diphosphate</text>
        <dbReference type="Rhea" id="RHEA:21248"/>
        <dbReference type="Rhea" id="RHEA-COMP:14527"/>
        <dbReference type="Rhea" id="RHEA-COMP:17342"/>
        <dbReference type="ChEBI" id="CHEBI:33019"/>
        <dbReference type="ChEBI" id="CHEBI:61557"/>
        <dbReference type="ChEBI" id="CHEBI:140395"/>
        <dbReference type="EC" id="2.7.7.6"/>
    </reaction>
</comment>
<comment type="subunit">
    <text evidence="1">The RNAP catalytic core consists of 2 alpha, 1 beta, 1 beta' and 1 omega subunit. When a sigma factor is associated with the core the holoenzyme is formed, which can initiate transcription.</text>
</comment>
<comment type="similarity">
    <text evidence="1">Belongs to the RNA polymerase beta chain family.</text>
</comment>
<feature type="chain" id="PRO_0000300313" description="DNA-directed RNA polymerase subunit beta">
    <location>
        <begin position="1"/>
        <end position="1342"/>
    </location>
</feature>
<feature type="modified residue" description="N6-acetyllysine" evidence="1">
    <location>
        <position position="1022"/>
    </location>
</feature>
<feature type="modified residue" description="N6-acetyllysine" evidence="1">
    <location>
        <position position="1200"/>
    </location>
</feature>
<proteinExistence type="inferred from homology"/>
<name>RPOB_ECOL5</name>
<evidence type="ECO:0000255" key="1">
    <source>
        <dbReference type="HAMAP-Rule" id="MF_01321"/>
    </source>
</evidence>
<reference key="1">
    <citation type="journal article" date="2006" name="Mol. Microbiol.">
        <title>Role of pathogenicity island-associated integrases in the genome plasticity of uropathogenic Escherichia coli strain 536.</title>
        <authorList>
            <person name="Hochhut B."/>
            <person name="Wilde C."/>
            <person name="Balling G."/>
            <person name="Middendorf B."/>
            <person name="Dobrindt U."/>
            <person name="Brzuszkiewicz E."/>
            <person name="Gottschalk G."/>
            <person name="Carniel E."/>
            <person name="Hacker J."/>
        </authorList>
    </citation>
    <scope>NUCLEOTIDE SEQUENCE [LARGE SCALE GENOMIC DNA]</scope>
    <source>
        <strain>536 / UPEC</strain>
    </source>
</reference>
<keyword id="KW-0007">Acetylation</keyword>
<keyword id="KW-0240">DNA-directed RNA polymerase</keyword>
<keyword id="KW-0548">Nucleotidyltransferase</keyword>
<keyword id="KW-0804">Transcription</keyword>
<keyword id="KW-0808">Transferase</keyword>
<accession>Q0TA78</accession>
<sequence>MVYSYTEKKRIRKDFGKRPQVLDVPYLLSIQLDSFQKFIEQDPEGQYGLEAAFRSVFPIQSYSGNSELQYVSYRLGEPVFDVQECQIRGVTYSAPLRVKLRLVIYEREAPEGTVKDIKEQEVYMGEIPLMTDNGTFVINGTERVIVSQLHRSPGVFFDSDKGKTHSSGKVLYNARIIPYRGSWLDFEFDPKDNLFVRIDRRRKLPATIILRALNYTTEQILDLFFEKVIFEIRDNKLQMELVPERLRGETASFDIEANGKVYVEKGRRITARHIRQLEKDDVKLIEVPVEYIAGKVVAKDYIDESTGELICAANMELSLDLLAKLSQSGHKRIETLFTNDLDHGPYISETLRVDPTNDRLSALVEIYRMMRPGEPPTREAAESLFENLFFSEDRYDLSAVGRMKFNRSLLREEIEGSGILSKDDIIDVMKKLIDIRNGKGEVDDIDHLGNRRIRSVGEMAENQFRVGLVRVERAVKERLSLGDLDTLMPQDMINAKPISAAVKEFFGSSQLSQFMDQNNPLSEITHKRRISALGPGGLTRERAGFEVRDVHPTHYGRVCPIETPEGPNIGLINSLSVYAQTNEYGFLETPYRKVTDGVVTDEIHYLSAIEEGNYVIAQANSNLDEEGHFVEDLVTCRSKGESSLFSRDQVDYMDVSTQQVVSVGASLIPFLEHDDANRALMGANMQRQAVPTLRADKPLVGTGMERAVAVDSGVTAVAKRGGVVQYVDASRIVIKVNEDEMYPGEAGIDIYNLTKYTRSNQNTCINQMPCVSLGEPVERGDVLADGPSTDLGELALGQNMRVAFMPWNGYNFEDSILVSERVVQEDRFTTIHIQELACVSRDTKLGPEEITADIPNVGEAALSKLDESGIVYIGAEVTGGDILVGKVTPKGETQLTPEEKLLRAIFGEKASDVKDSSLRVPNGVSGTVIDVQVFTRDGVEKDKRALEIEEMQLKQAKKDLSEELQILEAGLFSRIRAVLVAGGVEAEKLDKLPRDRWLELGLTDEEKQNQLEQLAEQYDELKHEFEKKLEAKRRKITQGDDLSPGVLKIVKVYLAVKRRIQPGDKMAGRHGNKGVISKINPIEDMPYDENGTPVDIVLNPLGVPSRMNIGQILETHLGMAAKGIGDKINAMLKQQQEVAKLREFIQRAYDLGADVRQKVDLSTFSDEEVMRLAENLRKGMPIATPVFDGAKEAEIKELLKLGDLPTSGQIRLYDGRTGEQFERPVTVGYMYMLKLNHLVDDKMHARSTGSYSLVTQQPLGGKAQFGGQRFGEMEVWALEAYGAAYTLQEMLTVKSDDVNGRTKMYKNIVDGNHQMEPGMPESFNVLLKEIRSLGINIELEDE</sequence>
<dbReference type="EC" id="2.7.7.6" evidence="1"/>
<dbReference type="EMBL" id="CP000247">
    <property type="protein sequence ID" value="ABG72151.1"/>
    <property type="molecule type" value="Genomic_DNA"/>
</dbReference>
<dbReference type="RefSeq" id="WP_011579297.1">
    <property type="nucleotide sequence ID" value="NC_008253.1"/>
</dbReference>
<dbReference type="SMR" id="Q0TA78"/>
<dbReference type="KEGG" id="ecp:ECP_4200"/>
<dbReference type="HOGENOM" id="CLU_000524_4_3_6"/>
<dbReference type="Proteomes" id="UP000009182">
    <property type="component" value="Chromosome"/>
</dbReference>
<dbReference type="GO" id="GO:0000428">
    <property type="term" value="C:DNA-directed RNA polymerase complex"/>
    <property type="evidence" value="ECO:0007669"/>
    <property type="project" value="UniProtKB-KW"/>
</dbReference>
<dbReference type="GO" id="GO:0003677">
    <property type="term" value="F:DNA binding"/>
    <property type="evidence" value="ECO:0007669"/>
    <property type="project" value="UniProtKB-UniRule"/>
</dbReference>
<dbReference type="GO" id="GO:0003899">
    <property type="term" value="F:DNA-directed RNA polymerase activity"/>
    <property type="evidence" value="ECO:0007669"/>
    <property type="project" value="UniProtKB-UniRule"/>
</dbReference>
<dbReference type="GO" id="GO:0032549">
    <property type="term" value="F:ribonucleoside binding"/>
    <property type="evidence" value="ECO:0007669"/>
    <property type="project" value="InterPro"/>
</dbReference>
<dbReference type="GO" id="GO:0006351">
    <property type="term" value="P:DNA-templated transcription"/>
    <property type="evidence" value="ECO:0007669"/>
    <property type="project" value="UniProtKB-UniRule"/>
</dbReference>
<dbReference type="CDD" id="cd00653">
    <property type="entry name" value="RNA_pol_B_RPB2"/>
    <property type="match status" value="1"/>
</dbReference>
<dbReference type="FunFam" id="2.30.150.10:FF:000001">
    <property type="entry name" value="DNA-directed RNA polymerase subunit beta"/>
    <property type="match status" value="1"/>
</dbReference>
<dbReference type="FunFam" id="2.40.270.10:FF:000003">
    <property type="entry name" value="DNA-directed RNA polymerase subunit beta"/>
    <property type="match status" value="1"/>
</dbReference>
<dbReference type="FunFam" id="2.40.270.10:FF:000004">
    <property type="entry name" value="DNA-directed RNA polymerase subunit beta"/>
    <property type="match status" value="1"/>
</dbReference>
<dbReference type="FunFam" id="2.40.50.100:FF:000006">
    <property type="entry name" value="DNA-directed RNA polymerase subunit beta"/>
    <property type="match status" value="1"/>
</dbReference>
<dbReference type="FunFam" id="2.40.50.150:FF:000001">
    <property type="entry name" value="DNA-directed RNA polymerase subunit beta"/>
    <property type="match status" value="1"/>
</dbReference>
<dbReference type="FunFam" id="3.90.1100.10:FF:000002">
    <property type="entry name" value="DNA-directed RNA polymerase subunit beta"/>
    <property type="match status" value="1"/>
</dbReference>
<dbReference type="FunFam" id="3.90.1110.10:FF:000001">
    <property type="entry name" value="DNA-directed RNA polymerase subunit beta"/>
    <property type="match status" value="1"/>
</dbReference>
<dbReference type="FunFam" id="3.90.1110.10:FF:000004">
    <property type="entry name" value="DNA-directed RNA polymerase subunit beta"/>
    <property type="match status" value="1"/>
</dbReference>
<dbReference type="FunFam" id="3.90.1800.10:FF:000001">
    <property type="entry name" value="DNA-directed RNA polymerase subunit beta"/>
    <property type="match status" value="1"/>
</dbReference>
<dbReference type="Gene3D" id="2.40.50.100">
    <property type="match status" value="1"/>
</dbReference>
<dbReference type="Gene3D" id="2.40.50.150">
    <property type="match status" value="1"/>
</dbReference>
<dbReference type="Gene3D" id="3.90.1100.10">
    <property type="match status" value="2"/>
</dbReference>
<dbReference type="Gene3D" id="6.10.140.1670">
    <property type="match status" value="1"/>
</dbReference>
<dbReference type="Gene3D" id="2.30.150.10">
    <property type="entry name" value="DNA-directed RNA polymerase, beta subunit, external 1 domain"/>
    <property type="match status" value="1"/>
</dbReference>
<dbReference type="Gene3D" id="2.40.270.10">
    <property type="entry name" value="DNA-directed RNA polymerase, subunit 2, domain 6"/>
    <property type="match status" value="1"/>
</dbReference>
<dbReference type="Gene3D" id="3.90.1800.10">
    <property type="entry name" value="RNA polymerase alpha subunit dimerisation domain"/>
    <property type="match status" value="1"/>
</dbReference>
<dbReference type="Gene3D" id="3.90.1110.10">
    <property type="entry name" value="RNA polymerase Rpb2, domain 2"/>
    <property type="match status" value="1"/>
</dbReference>
<dbReference type="HAMAP" id="MF_01321">
    <property type="entry name" value="RNApol_bact_RpoB"/>
    <property type="match status" value="1"/>
</dbReference>
<dbReference type="InterPro" id="IPR042107">
    <property type="entry name" value="DNA-dir_RNA_pol_bsu_ext_1_sf"/>
</dbReference>
<dbReference type="InterPro" id="IPR019462">
    <property type="entry name" value="DNA-dir_RNA_pol_bsu_external_1"/>
</dbReference>
<dbReference type="InterPro" id="IPR015712">
    <property type="entry name" value="DNA-dir_RNA_pol_su2"/>
</dbReference>
<dbReference type="InterPro" id="IPR007120">
    <property type="entry name" value="DNA-dir_RNAP_su2_dom"/>
</dbReference>
<dbReference type="InterPro" id="IPR037033">
    <property type="entry name" value="DNA-dir_RNAP_su2_hyb_sf"/>
</dbReference>
<dbReference type="InterPro" id="IPR010243">
    <property type="entry name" value="RNA_pol_bsu_bac"/>
</dbReference>
<dbReference type="InterPro" id="IPR007121">
    <property type="entry name" value="RNA_pol_bsu_CS"/>
</dbReference>
<dbReference type="InterPro" id="IPR007644">
    <property type="entry name" value="RNA_pol_bsu_protrusion"/>
</dbReference>
<dbReference type="InterPro" id="IPR007642">
    <property type="entry name" value="RNA_pol_Rpb2_2"/>
</dbReference>
<dbReference type="InterPro" id="IPR037034">
    <property type="entry name" value="RNA_pol_Rpb2_2_sf"/>
</dbReference>
<dbReference type="InterPro" id="IPR007645">
    <property type="entry name" value="RNA_pol_Rpb2_3"/>
</dbReference>
<dbReference type="InterPro" id="IPR007641">
    <property type="entry name" value="RNA_pol_Rpb2_7"/>
</dbReference>
<dbReference type="InterPro" id="IPR014724">
    <property type="entry name" value="RNA_pol_RPB2_OB-fold"/>
</dbReference>
<dbReference type="NCBIfam" id="NF001616">
    <property type="entry name" value="PRK00405.1"/>
    <property type="match status" value="1"/>
</dbReference>
<dbReference type="NCBIfam" id="TIGR02013">
    <property type="entry name" value="rpoB"/>
    <property type="match status" value="1"/>
</dbReference>
<dbReference type="PANTHER" id="PTHR20856">
    <property type="entry name" value="DNA-DIRECTED RNA POLYMERASE I SUBUNIT 2"/>
    <property type="match status" value="1"/>
</dbReference>
<dbReference type="Pfam" id="PF04563">
    <property type="entry name" value="RNA_pol_Rpb2_1"/>
    <property type="match status" value="1"/>
</dbReference>
<dbReference type="Pfam" id="PF04561">
    <property type="entry name" value="RNA_pol_Rpb2_2"/>
    <property type="match status" value="2"/>
</dbReference>
<dbReference type="Pfam" id="PF04565">
    <property type="entry name" value="RNA_pol_Rpb2_3"/>
    <property type="match status" value="1"/>
</dbReference>
<dbReference type="Pfam" id="PF10385">
    <property type="entry name" value="RNA_pol_Rpb2_45"/>
    <property type="match status" value="1"/>
</dbReference>
<dbReference type="Pfam" id="PF00562">
    <property type="entry name" value="RNA_pol_Rpb2_6"/>
    <property type="match status" value="1"/>
</dbReference>
<dbReference type="Pfam" id="PF04560">
    <property type="entry name" value="RNA_pol_Rpb2_7"/>
    <property type="match status" value="1"/>
</dbReference>
<dbReference type="SUPFAM" id="SSF64484">
    <property type="entry name" value="beta and beta-prime subunits of DNA dependent RNA-polymerase"/>
    <property type="match status" value="1"/>
</dbReference>
<dbReference type="PROSITE" id="PS01166">
    <property type="entry name" value="RNA_POL_BETA"/>
    <property type="match status" value="1"/>
</dbReference>
<gene>
    <name evidence="1" type="primary">rpoB</name>
    <name type="ordered locus">ECP_4200</name>
</gene>